<comment type="function">
    <text evidence="1">Can catalyze the hydrolysis of ATP in the presence of single-stranded DNA, the ATP-dependent uptake of single-stranded DNA by duplex DNA, and the ATP-dependent hybridization of homologous single-stranded DNAs. It interacts with LexA causing its activation and leading to its autocatalytic cleavage (By similarity).</text>
</comment>
<comment type="subcellular location">
    <subcellularLocation>
        <location evidence="1">Cytoplasm</location>
    </subcellularLocation>
</comment>
<comment type="similarity">
    <text evidence="2">Belongs to the RecA family.</text>
</comment>
<reference key="1">
    <citation type="journal article" date="2000" name="Appl. Environ. Microbiol.">
        <title>Genetic diversity among Arthrobacter species collected across a heterogeneous series of terrestrial deep-subsurface sediments as determined on the basis of 16S rRNA and recA gene sequences.</title>
        <authorList>
            <person name="van Waasbergen L.G."/>
            <person name="Balkwill D.L."/>
            <person name="Crocker F.H."/>
            <person name="Bjornstad B.N."/>
            <person name="Miller R.V."/>
        </authorList>
    </citation>
    <scope>NUCLEOTIDE SEQUENCE [GENOMIC DNA]</scope>
    <source>
        <strain>ATCC 13344 / DSM 20116 / NCIB 8912</strain>
    </source>
</reference>
<dbReference type="EMBL" id="AF214793">
    <property type="protein sequence ID" value="AAF25440.1"/>
    <property type="molecule type" value="Genomic_DNA"/>
</dbReference>
<dbReference type="SMR" id="Q9REJ6"/>
<dbReference type="GO" id="GO:0005829">
    <property type="term" value="C:cytosol"/>
    <property type="evidence" value="ECO:0007669"/>
    <property type="project" value="TreeGrafter"/>
</dbReference>
<dbReference type="GO" id="GO:0005524">
    <property type="term" value="F:ATP binding"/>
    <property type="evidence" value="ECO:0007669"/>
    <property type="project" value="UniProtKB-KW"/>
</dbReference>
<dbReference type="GO" id="GO:0016887">
    <property type="term" value="F:ATP hydrolysis activity"/>
    <property type="evidence" value="ECO:0007669"/>
    <property type="project" value="InterPro"/>
</dbReference>
<dbReference type="GO" id="GO:0140664">
    <property type="term" value="F:ATP-dependent DNA damage sensor activity"/>
    <property type="evidence" value="ECO:0007669"/>
    <property type="project" value="InterPro"/>
</dbReference>
<dbReference type="GO" id="GO:0003697">
    <property type="term" value="F:single-stranded DNA binding"/>
    <property type="evidence" value="ECO:0007669"/>
    <property type="project" value="InterPro"/>
</dbReference>
<dbReference type="GO" id="GO:0006310">
    <property type="term" value="P:DNA recombination"/>
    <property type="evidence" value="ECO:0007669"/>
    <property type="project" value="UniProtKB-KW"/>
</dbReference>
<dbReference type="GO" id="GO:0006281">
    <property type="term" value="P:DNA repair"/>
    <property type="evidence" value="ECO:0007669"/>
    <property type="project" value="UniProtKB-KW"/>
</dbReference>
<dbReference type="GO" id="GO:0009432">
    <property type="term" value="P:SOS response"/>
    <property type="evidence" value="ECO:0007669"/>
    <property type="project" value="UniProtKB-KW"/>
</dbReference>
<dbReference type="CDD" id="cd00983">
    <property type="entry name" value="RecA"/>
    <property type="match status" value="1"/>
</dbReference>
<dbReference type="FunFam" id="3.40.50.300:FF:000087">
    <property type="entry name" value="Recombinase RecA"/>
    <property type="match status" value="1"/>
</dbReference>
<dbReference type="Gene3D" id="3.40.50.300">
    <property type="entry name" value="P-loop containing nucleotide triphosphate hydrolases"/>
    <property type="match status" value="1"/>
</dbReference>
<dbReference type="InterPro" id="IPR003593">
    <property type="entry name" value="AAA+_ATPase"/>
</dbReference>
<dbReference type="InterPro" id="IPR013765">
    <property type="entry name" value="DNA_recomb/repair_RecA"/>
</dbReference>
<dbReference type="InterPro" id="IPR020584">
    <property type="entry name" value="DNA_recomb/repair_RecA_CS"/>
</dbReference>
<dbReference type="InterPro" id="IPR027417">
    <property type="entry name" value="P-loop_NTPase"/>
</dbReference>
<dbReference type="InterPro" id="IPR049428">
    <property type="entry name" value="RecA-like_N"/>
</dbReference>
<dbReference type="InterPro" id="IPR020588">
    <property type="entry name" value="RecA_ATP-bd"/>
</dbReference>
<dbReference type="InterPro" id="IPR020587">
    <property type="entry name" value="RecA_monomer-monomer_interface"/>
</dbReference>
<dbReference type="NCBIfam" id="TIGR02012">
    <property type="entry name" value="tigrfam_recA"/>
    <property type="match status" value="1"/>
</dbReference>
<dbReference type="PANTHER" id="PTHR45900:SF1">
    <property type="entry name" value="MITOCHONDRIAL DNA REPAIR PROTEIN RECA HOMOLOG-RELATED"/>
    <property type="match status" value="1"/>
</dbReference>
<dbReference type="PANTHER" id="PTHR45900">
    <property type="entry name" value="RECA"/>
    <property type="match status" value="1"/>
</dbReference>
<dbReference type="Pfam" id="PF00154">
    <property type="entry name" value="RecA"/>
    <property type="match status" value="1"/>
</dbReference>
<dbReference type="PRINTS" id="PR00142">
    <property type="entry name" value="RECA"/>
</dbReference>
<dbReference type="SMART" id="SM00382">
    <property type="entry name" value="AAA"/>
    <property type="match status" value="1"/>
</dbReference>
<dbReference type="SUPFAM" id="SSF52540">
    <property type="entry name" value="P-loop containing nucleoside triphosphate hydrolases"/>
    <property type="match status" value="1"/>
</dbReference>
<dbReference type="PROSITE" id="PS00321">
    <property type="entry name" value="RECA_1"/>
    <property type="match status" value="1"/>
</dbReference>
<dbReference type="PROSITE" id="PS50162">
    <property type="entry name" value="RECA_2"/>
    <property type="match status" value="1"/>
</dbReference>
<dbReference type="PROSITE" id="PS50163">
    <property type="entry name" value="RECA_3"/>
    <property type="match status" value="1"/>
</dbReference>
<protein>
    <recommendedName>
        <fullName>Protein RecA</fullName>
    </recommendedName>
    <alternativeName>
        <fullName>Recombinase A</fullName>
    </alternativeName>
</protein>
<organism>
    <name type="scientific">Paenarthrobacter aurescens</name>
    <name type="common">Arthrobacter aurescens</name>
    <dbReference type="NCBI Taxonomy" id="43663"/>
    <lineage>
        <taxon>Bacteria</taxon>
        <taxon>Bacillati</taxon>
        <taxon>Actinomycetota</taxon>
        <taxon>Actinomycetes</taxon>
        <taxon>Micrococcales</taxon>
        <taxon>Micrococcaceae</taxon>
        <taxon>Paenarthrobacter</taxon>
    </lineage>
</organism>
<evidence type="ECO:0000250" key="1"/>
<evidence type="ECO:0000305" key="2"/>
<proteinExistence type="inferred from homology"/>
<gene>
    <name type="primary">recA</name>
</gene>
<keyword id="KW-0067">ATP-binding</keyword>
<keyword id="KW-0963">Cytoplasm</keyword>
<keyword id="KW-0227">DNA damage</keyword>
<keyword id="KW-0233">DNA recombination</keyword>
<keyword id="KW-0234">DNA repair</keyword>
<keyword id="KW-0238">DNA-binding</keyword>
<keyword id="KW-0547">Nucleotide-binding</keyword>
<keyword id="KW-0742">SOS response</keyword>
<accession>Q9REJ6</accession>
<name>RECA_PAEAU</name>
<feature type="chain" id="PRO_0000122644" description="Protein RecA">
    <location>
        <begin position="1" status="less than"/>
        <end position="218" status="greater than"/>
    </location>
</feature>
<feature type="binding site" evidence="1">
    <location>
        <begin position="16"/>
        <end position="23"/>
    </location>
    <ligand>
        <name>ATP</name>
        <dbReference type="ChEBI" id="CHEBI:30616"/>
    </ligand>
</feature>
<feature type="non-terminal residue">
    <location>
        <position position="1"/>
    </location>
</feature>
<feature type="non-terminal residue">
    <location>
        <position position="218"/>
    </location>
</feature>
<sequence>LGIGGLPRGRVVEIYGPESSGKTTVALHAVANAQRAGGIAAFIDAEHALDPDYAAKLGVDTDALLVSQPDTGEQALEIMDMLVGSGSLDIVVIDSVAALVPRAEIEGEMGDSHVGLQARLMSQALRKITGRLSQTKTTAIFINQLREKIGVFFGSPETTTGGKALKFYASVRIDVRRIQTLKEGADSVGNRTKAKIVKNKMAPPFKIAEFDIIYGQGI</sequence>